<reference key="1">
    <citation type="journal article" date="2002" name="J. Mol. Biol.">
        <title>Bacteriophage Mu genome sequence: analysis and comparison with Mu-like prophages in Haemophilus, Neisseria and Deinococcus.</title>
        <authorList>
            <person name="Morgan G.J."/>
            <person name="Hatfull G.F."/>
            <person name="Casjens S."/>
            <person name="Hendrix R.W."/>
        </authorList>
    </citation>
    <scope>NUCLEOTIDE SEQUENCE [LARGE SCALE GENOMIC DNA]</scope>
</reference>
<reference key="2">
    <citation type="journal article" date="1989" name="J. Bacteriol.">
        <title>Localization and regulation of bacteriophage Mu promoters.</title>
        <authorList>
            <person name="Stoddard S.F."/>
            <person name="Howe M.M."/>
        </authorList>
    </citation>
    <scope>INDUCTION</scope>
</reference>
<feature type="chain" id="PRO_0000077810" description="Uncharacterized protein gp15">
    <location>
        <begin position="1"/>
        <end position="88"/>
    </location>
</feature>
<sequence length="88" mass="9686">MENNVQPYDVAGYAIASALVRLLVKKAIITAEEGKAIFSSSAEILKDAPAMRTSRREKLQLSKIMEDIISSLDPDADGSQKPQTHERQ</sequence>
<gene>
    <name type="ordered locus">Mup15</name>
</gene>
<protein>
    <recommendedName>
        <fullName>Uncharacterized protein gp15</fullName>
    </recommendedName>
    <alternativeName>
        <fullName>Gene product 15</fullName>
        <shortName>gp15</shortName>
    </alternativeName>
</protein>
<organism>
    <name type="scientific">Escherichia phage Mu</name>
    <name type="common">Bacteriophage Mu</name>
    <dbReference type="NCBI Taxonomy" id="2681603"/>
    <lineage>
        <taxon>Viruses</taxon>
        <taxon>Duplodnaviria</taxon>
        <taxon>Heunggongvirae</taxon>
        <taxon>Uroviricota</taxon>
        <taxon>Caudoviricetes</taxon>
        <taxon>Muvirus</taxon>
        <taxon>Muvirus mu</taxon>
    </lineage>
</organism>
<evidence type="ECO:0000269" key="1">
    <source>
    </source>
</evidence>
<evidence type="ECO:0000305" key="2"/>
<dbReference type="EMBL" id="AF083977">
    <property type="protein sequence ID" value="AAF01092.1"/>
    <property type="molecule type" value="Genomic_DNA"/>
</dbReference>
<dbReference type="RefSeq" id="NP_050619.1">
    <property type="nucleotide sequence ID" value="NC_000929.1"/>
</dbReference>
<dbReference type="GeneID" id="2636284"/>
<dbReference type="KEGG" id="vg:2636284"/>
<dbReference type="Proteomes" id="UP000002611">
    <property type="component" value="Genome"/>
</dbReference>
<dbReference type="GO" id="GO:0030430">
    <property type="term" value="C:host cell cytoplasm"/>
    <property type="evidence" value="ECO:0007669"/>
    <property type="project" value="UniProtKB-SubCell"/>
</dbReference>
<proteinExistence type="evidence at transcript level"/>
<accession>Q9T1X4</accession>
<comment type="subcellular location">
    <subcellularLocation>
        <location evidence="2">Host cytoplasm</location>
    </subcellularLocation>
</comment>
<comment type="induction">
    <text evidence="1">Expressed in the early phase of the viral replicative cycle. Expression of early genes is repressed by viral Repc (latency) and favored by viral Ner protein.</text>
</comment>
<organismHost>
    <name type="scientific">Enterobacteriaceae</name>
    <dbReference type="NCBI Taxonomy" id="543"/>
</organismHost>
<name>GP15_BPMU</name>
<keyword id="KW-0244">Early protein</keyword>
<keyword id="KW-1035">Host cytoplasm</keyword>
<keyword id="KW-1185">Reference proteome</keyword>